<evidence type="ECO:0000250" key="1"/>
<evidence type="ECO:0000250" key="2">
    <source>
        <dbReference type="UniProtKB" id="O88496"/>
    </source>
</evidence>
<evidence type="ECO:0000250" key="3">
    <source>
        <dbReference type="UniProtKB" id="P38435"/>
    </source>
</evidence>
<evidence type="ECO:0000255" key="4"/>
<evidence type="ECO:0000256" key="5">
    <source>
        <dbReference type="SAM" id="MobiDB-lite"/>
    </source>
</evidence>
<evidence type="ECO:0000269" key="6">
    <source>
    </source>
</evidence>
<evidence type="ECO:0000269" key="7">
    <source>
    </source>
</evidence>
<evidence type="ECO:0000305" key="8"/>
<accession>Q9QYC7</accession>
<accession>Q3UXN5</accession>
<accession>Q8CCB3</accession>
<protein>
    <recommendedName>
        <fullName>Vitamin K-dependent gamma-carboxylase</fullName>
        <ecNumber evidence="3">4.1.1.90</ecNumber>
    </recommendedName>
    <alternativeName>
        <fullName>Gamma-glutamyl carboxylase</fullName>
    </alternativeName>
    <alternativeName>
        <fullName>Peptidyl-glutamate 4-carboxylase</fullName>
    </alternativeName>
    <alternativeName>
        <fullName>Vitamin K gamma glutamyl carboxylase</fullName>
    </alternativeName>
</protein>
<keyword id="KW-0007">Acetylation</keyword>
<keyword id="KW-1015">Disulfide bond</keyword>
<keyword id="KW-0256">Endoplasmic reticulum</keyword>
<keyword id="KW-0456">Lyase</keyword>
<keyword id="KW-0472">Membrane</keyword>
<keyword id="KW-1185">Reference proteome</keyword>
<keyword id="KW-0812">Transmembrane</keyword>
<keyword id="KW-1133">Transmembrane helix</keyword>
<feature type="initiator methionine" description="Removed" evidence="3">
    <location>
        <position position="1"/>
    </location>
</feature>
<feature type="chain" id="PRO_0000191824" description="Vitamin K-dependent gamma-carboxylase">
    <location>
        <begin position="2"/>
        <end position="757"/>
    </location>
</feature>
<feature type="topological domain" description="Cytoplasmic" evidence="4">
    <location>
        <begin position="2"/>
        <end position="60"/>
    </location>
</feature>
<feature type="transmembrane region" description="Helical" evidence="4">
    <location>
        <begin position="61"/>
        <end position="81"/>
    </location>
</feature>
<feature type="topological domain" description="Lumenal" evidence="4">
    <location>
        <begin position="82"/>
        <end position="113"/>
    </location>
</feature>
<feature type="transmembrane region" description="Helical" evidence="4">
    <location>
        <begin position="114"/>
        <end position="134"/>
    </location>
</feature>
<feature type="topological domain" description="Cytoplasmic" evidence="4">
    <location>
        <begin position="135"/>
        <end position="136"/>
    </location>
</feature>
<feature type="transmembrane region" description="Helical" evidence="4">
    <location>
        <begin position="137"/>
        <end position="157"/>
    </location>
</feature>
<feature type="topological domain" description="Lumenal" evidence="4">
    <location>
        <begin position="158"/>
        <end position="292"/>
    </location>
</feature>
<feature type="transmembrane region" description="Helical" evidence="4">
    <location>
        <begin position="293"/>
        <end position="313"/>
    </location>
</feature>
<feature type="topological domain" description="Cytoplasmic" evidence="4">
    <location>
        <begin position="314"/>
        <end position="361"/>
    </location>
</feature>
<feature type="transmembrane region" description="Helical" evidence="4">
    <location>
        <begin position="362"/>
        <end position="382"/>
    </location>
</feature>
<feature type="topological domain" description="Lumenal" evidence="4">
    <location>
        <begin position="383"/>
        <end position="757"/>
    </location>
</feature>
<feature type="region of interest" description="Disordered" evidence="5">
    <location>
        <begin position="729"/>
        <end position="757"/>
    </location>
</feature>
<feature type="compositionally biased region" description="Polar residues" evidence="5">
    <location>
        <begin position="734"/>
        <end position="745"/>
    </location>
</feature>
<feature type="compositionally biased region" description="Basic and acidic residues" evidence="5">
    <location>
        <begin position="746"/>
        <end position="757"/>
    </location>
</feature>
<feature type="modified residue" description="N-acetylalanine" evidence="3">
    <location>
        <position position="2"/>
    </location>
</feature>
<feature type="disulfide bond" evidence="1">
    <location>
        <begin position="99"/>
        <end position="450"/>
    </location>
</feature>
<feature type="sequence conflict" description="In Ref. 2; BAC28319." evidence="8" ref="2">
    <original>N</original>
    <variation>K</variation>
    <location>
        <position position="525"/>
    </location>
</feature>
<organism>
    <name type="scientific">Mus musculus</name>
    <name type="common">Mouse</name>
    <dbReference type="NCBI Taxonomy" id="10090"/>
    <lineage>
        <taxon>Eukaryota</taxon>
        <taxon>Metazoa</taxon>
        <taxon>Chordata</taxon>
        <taxon>Craniata</taxon>
        <taxon>Vertebrata</taxon>
        <taxon>Euteleostomi</taxon>
        <taxon>Mammalia</taxon>
        <taxon>Eutheria</taxon>
        <taxon>Euarchontoglires</taxon>
        <taxon>Glires</taxon>
        <taxon>Rodentia</taxon>
        <taxon>Myomorpha</taxon>
        <taxon>Muroidea</taxon>
        <taxon>Muridae</taxon>
        <taxon>Murinae</taxon>
        <taxon>Mus</taxon>
        <taxon>Mus</taxon>
    </lineage>
</organism>
<comment type="function">
    <text evidence="3 7">Mediates the vitamin K-dependent carboxylation of glutamate residues to calcium-binding gamma-carboxyglutamate (Gla) residues with the concomitant conversion of the reduced hydroquinone form of vitamin K to vitamin K epoxide (By similarity). Catalyzes gamma-carboxylation of various proteins, such as blood coagulation factors (F2, F7, F9 and F10), osteocalcin (bglap and bglap2) or matrix Gla protein (MGP) (PubMed:25264202).</text>
</comment>
<comment type="catalytic activity">
    <reaction evidence="3">
        <text>4-carboxy-L-glutamyl-[protein] + 2,3-epoxyphylloquinone + H2O + H(+) = phylloquinol + L-glutamyl-[protein] + CO2 + O2</text>
        <dbReference type="Rhea" id="RHEA:45140"/>
        <dbReference type="Rhea" id="RHEA-COMP:10208"/>
        <dbReference type="Rhea" id="RHEA-COMP:11094"/>
        <dbReference type="ChEBI" id="CHEBI:15377"/>
        <dbReference type="ChEBI" id="CHEBI:15378"/>
        <dbReference type="ChEBI" id="CHEBI:15379"/>
        <dbReference type="ChEBI" id="CHEBI:15759"/>
        <dbReference type="ChEBI" id="CHEBI:16526"/>
        <dbReference type="ChEBI" id="CHEBI:28433"/>
        <dbReference type="ChEBI" id="CHEBI:29973"/>
        <dbReference type="ChEBI" id="CHEBI:84990"/>
        <dbReference type="EC" id="4.1.1.90"/>
    </reaction>
    <physiologicalReaction direction="right-to-left" evidence="3">
        <dbReference type="Rhea" id="RHEA:45142"/>
    </physiologicalReaction>
</comment>
<comment type="subunit">
    <text evidence="2 3">Monomer (By similarity). May interact with CALU (By similarity).</text>
</comment>
<comment type="subcellular location">
    <subcellularLocation>
        <location evidence="3">Endoplasmic reticulum membrane</location>
        <topology evidence="3">Multi-pass membrane protein</topology>
    </subcellularLocation>
</comment>
<comment type="disruption phenotype">
    <text evidence="6 7">Embryonic lethality between 9.5-18 dpc due to massive hemorrhage (PubMed:17327402). Conditional deletion in osteoblasts leads to altered glucose metabolism due to inability to carboxylate osteocalcin (bglap and bglap2) (PubMed:25264202).</text>
</comment>
<comment type="miscellaneous">
    <text>The vitamin K-dependent protein substrates of carboxylase have usually a propeptide that binds to a high-affinity site on the carboxylase. CO(2), O(2) and reduced vitamin K are cosubstrates.</text>
</comment>
<comment type="similarity">
    <text evidence="8">Belongs to the vitamin K-dependent gamma-carboxylase family.</text>
</comment>
<name>VKGC_MOUSE</name>
<reference key="1">
    <citation type="submission" date="1998-08" db="EMBL/GenBank/DDBJ databases">
        <title>Characterization of the mouse gamma-carboxylase genomic locus and its promoter.</title>
        <authorList>
            <person name="Zhu A."/>
            <person name="Zheng X."/>
            <person name="Ginsburg D."/>
        </authorList>
    </citation>
    <scope>NUCLEOTIDE SEQUENCE [MRNA]</scope>
</reference>
<reference key="2">
    <citation type="journal article" date="2005" name="Science">
        <title>The transcriptional landscape of the mammalian genome.</title>
        <authorList>
            <person name="Carninci P."/>
            <person name="Kasukawa T."/>
            <person name="Katayama S."/>
            <person name="Gough J."/>
            <person name="Frith M.C."/>
            <person name="Maeda N."/>
            <person name="Oyama R."/>
            <person name="Ravasi T."/>
            <person name="Lenhard B."/>
            <person name="Wells C."/>
            <person name="Kodzius R."/>
            <person name="Shimokawa K."/>
            <person name="Bajic V.B."/>
            <person name="Brenner S.E."/>
            <person name="Batalov S."/>
            <person name="Forrest A.R."/>
            <person name="Zavolan M."/>
            <person name="Davis M.J."/>
            <person name="Wilming L.G."/>
            <person name="Aidinis V."/>
            <person name="Allen J.E."/>
            <person name="Ambesi-Impiombato A."/>
            <person name="Apweiler R."/>
            <person name="Aturaliya R.N."/>
            <person name="Bailey T.L."/>
            <person name="Bansal M."/>
            <person name="Baxter L."/>
            <person name="Beisel K.W."/>
            <person name="Bersano T."/>
            <person name="Bono H."/>
            <person name="Chalk A.M."/>
            <person name="Chiu K.P."/>
            <person name="Choudhary V."/>
            <person name="Christoffels A."/>
            <person name="Clutterbuck D.R."/>
            <person name="Crowe M.L."/>
            <person name="Dalla E."/>
            <person name="Dalrymple B.P."/>
            <person name="de Bono B."/>
            <person name="Della Gatta G."/>
            <person name="di Bernardo D."/>
            <person name="Down T."/>
            <person name="Engstrom P."/>
            <person name="Fagiolini M."/>
            <person name="Faulkner G."/>
            <person name="Fletcher C.F."/>
            <person name="Fukushima T."/>
            <person name="Furuno M."/>
            <person name="Futaki S."/>
            <person name="Gariboldi M."/>
            <person name="Georgii-Hemming P."/>
            <person name="Gingeras T.R."/>
            <person name="Gojobori T."/>
            <person name="Green R.E."/>
            <person name="Gustincich S."/>
            <person name="Harbers M."/>
            <person name="Hayashi Y."/>
            <person name="Hensch T.K."/>
            <person name="Hirokawa N."/>
            <person name="Hill D."/>
            <person name="Huminiecki L."/>
            <person name="Iacono M."/>
            <person name="Ikeo K."/>
            <person name="Iwama A."/>
            <person name="Ishikawa T."/>
            <person name="Jakt M."/>
            <person name="Kanapin A."/>
            <person name="Katoh M."/>
            <person name="Kawasawa Y."/>
            <person name="Kelso J."/>
            <person name="Kitamura H."/>
            <person name="Kitano H."/>
            <person name="Kollias G."/>
            <person name="Krishnan S.P."/>
            <person name="Kruger A."/>
            <person name="Kummerfeld S.K."/>
            <person name="Kurochkin I.V."/>
            <person name="Lareau L.F."/>
            <person name="Lazarevic D."/>
            <person name="Lipovich L."/>
            <person name="Liu J."/>
            <person name="Liuni S."/>
            <person name="McWilliam S."/>
            <person name="Madan Babu M."/>
            <person name="Madera M."/>
            <person name="Marchionni L."/>
            <person name="Matsuda H."/>
            <person name="Matsuzawa S."/>
            <person name="Miki H."/>
            <person name="Mignone F."/>
            <person name="Miyake S."/>
            <person name="Morris K."/>
            <person name="Mottagui-Tabar S."/>
            <person name="Mulder N."/>
            <person name="Nakano N."/>
            <person name="Nakauchi H."/>
            <person name="Ng P."/>
            <person name="Nilsson R."/>
            <person name="Nishiguchi S."/>
            <person name="Nishikawa S."/>
            <person name="Nori F."/>
            <person name="Ohara O."/>
            <person name="Okazaki Y."/>
            <person name="Orlando V."/>
            <person name="Pang K.C."/>
            <person name="Pavan W.J."/>
            <person name="Pavesi G."/>
            <person name="Pesole G."/>
            <person name="Petrovsky N."/>
            <person name="Piazza S."/>
            <person name="Reed J."/>
            <person name="Reid J.F."/>
            <person name="Ring B.Z."/>
            <person name="Ringwald M."/>
            <person name="Rost B."/>
            <person name="Ruan Y."/>
            <person name="Salzberg S.L."/>
            <person name="Sandelin A."/>
            <person name="Schneider C."/>
            <person name="Schoenbach C."/>
            <person name="Sekiguchi K."/>
            <person name="Semple C.A."/>
            <person name="Seno S."/>
            <person name="Sessa L."/>
            <person name="Sheng Y."/>
            <person name="Shibata Y."/>
            <person name="Shimada H."/>
            <person name="Shimada K."/>
            <person name="Silva D."/>
            <person name="Sinclair B."/>
            <person name="Sperling S."/>
            <person name="Stupka E."/>
            <person name="Sugiura K."/>
            <person name="Sultana R."/>
            <person name="Takenaka Y."/>
            <person name="Taki K."/>
            <person name="Tammoja K."/>
            <person name="Tan S.L."/>
            <person name="Tang S."/>
            <person name="Taylor M.S."/>
            <person name="Tegner J."/>
            <person name="Teichmann S.A."/>
            <person name="Ueda H.R."/>
            <person name="van Nimwegen E."/>
            <person name="Verardo R."/>
            <person name="Wei C.L."/>
            <person name="Yagi K."/>
            <person name="Yamanishi H."/>
            <person name="Zabarovsky E."/>
            <person name="Zhu S."/>
            <person name="Zimmer A."/>
            <person name="Hide W."/>
            <person name="Bult C."/>
            <person name="Grimmond S.M."/>
            <person name="Teasdale R.D."/>
            <person name="Liu E.T."/>
            <person name="Brusic V."/>
            <person name="Quackenbush J."/>
            <person name="Wahlestedt C."/>
            <person name="Mattick J.S."/>
            <person name="Hume D.A."/>
            <person name="Kai C."/>
            <person name="Sasaki D."/>
            <person name="Tomaru Y."/>
            <person name="Fukuda S."/>
            <person name="Kanamori-Katayama M."/>
            <person name="Suzuki M."/>
            <person name="Aoki J."/>
            <person name="Arakawa T."/>
            <person name="Iida J."/>
            <person name="Imamura K."/>
            <person name="Itoh M."/>
            <person name="Kato T."/>
            <person name="Kawaji H."/>
            <person name="Kawagashira N."/>
            <person name="Kawashima T."/>
            <person name="Kojima M."/>
            <person name="Kondo S."/>
            <person name="Konno H."/>
            <person name="Nakano K."/>
            <person name="Ninomiya N."/>
            <person name="Nishio T."/>
            <person name="Okada M."/>
            <person name="Plessy C."/>
            <person name="Shibata K."/>
            <person name="Shiraki T."/>
            <person name="Suzuki S."/>
            <person name="Tagami M."/>
            <person name="Waki K."/>
            <person name="Watahiki A."/>
            <person name="Okamura-Oho Y."/>
            <person name="Suzuki H."/>
            <person name="Kawai J."/>
            <person name="Hayashizaki Y."/>
        </authorList>
    </citation>
    <scope>NUCLEOTIDE SEQUENCE [LARGE SCALE MRNA]</scope>
    <source>
        <strain>C57BL/6J</strain>
        <tissue>Bone</tissue>
        <tissue>Colon</tissue>
        <tissue>Muellerian duct</tissue>
    </source>
</reference>
<reference key="3">
    <citation type="journal article" date="2010" name="Cell">
        <title>A tissue-specific atlas of mouse protein phosphorylation and expression.</title>
        <authorList>
            <person name="Huttlin E.L."/>
            <person name="Jedrychowski M.P."/>
            <person name="Elias J.E."/>
            <person name="Goswami T."/>
            <person name="Rad R."/>
            <person name="Beausoleil S.A."/>
            <person name="Villen J."/>
            <person name="Haas W."/>
            <person name="Sowa M.E."/>
            <person name="Gygi S.P."/>
        </authorList>
    </citation>
    <scope>IDENTIFICATION BY MASS SPECTROMETRY [LARGE SCALE ANALYSIS]</scope>
    <source>
        <tissue>Liver</tissue>
        <tissue>Lung</tissue>
    </source>
</reference>
<reference key="4">
    <citation type="journal article" date="2007" name="Blood">
        <title>Fatal hemorrhage in mice lacking gamma-glutamyl carboxylase.</title>
        <authorList>
            <person name="Zhu A."/>
            <person name="Sun H."/>
            <person name="Raymond R.M. Jr."/>
            <person name="Furie B.C."/>
            <person name="Furie B."/>
            <person name="Bronstein M."/>
            <person name="Kaufman R.J."/>
            <person name="Westrick R."/>
            <person name="Ginsburg D."/>
        </authorList>
    </citation>
    <scope>DISRUPTION PHENOTYPE</scope>
</reference>
<reference key="5">
    <citation type="journal article" date="2014" name="Biochem. Biophys. Res. Commun.">
        <title>gamma-Glutamyl carboxylase in osteoblasts regulates glucose metabolism in mice.</title>
        <authorList>
            <person name="Shiba S."/>
            <person name="Ikeda K."/>
            <person name="Azuma K."/>
            <person name="Hasegawa T."/>
            <person name="Amizuka N."/>
            <person name="Horie-Inoue K."/>
            <person name="Inoue S."/>
        </authorList>
    </citation>
    <scope>FUNCTION</scope>
    <scope>DISRUPTION PHENOTYPE</scope>
</reference>
<sequence>MAVHRGSALVAPASDKVQKNKSAQTSGLKQGSRMEKILGFEWTDLSSWQSVVTLLNKPTDPANLAVFRFLFAFLMLLDIPQERGLSSLDRKYLDGLDVCRFPLLDALRPLPLDWMYLVYTIMFLGALGMMLGLCYRLSCVLFLLPYWYVFLLDKTSWNNHSYLYGLLAFQLTFMDANHYWSVDGLLNARKKNAHVPLWNYTVLRGQIFIVYFIAGVKKLDADWVGGYSMEHLSRHWLFSPFKLVLSEELTSLLVVHWCGLLLDLSAGFLLFFDASRPVGLFFVSYFHCMNSQLFSIGMFPYVMLASSPLFCSAEWPRKLVARCPKRLQELLPTKAAPRPSASCVYKRSRGKAGPKPGLRHQLGAIFTLLYLLEQLFLPYSHFLTQGYNNWTNGLYGYSWDMMVHSRSHQHVKITYRDGLTGELGYLNPGVFTQSRRWKDHADMLKQYATCLSLLLPKYNVTEPQIYFDIWVSINDRFQQRLFDPRVDIVQAVWSPFQRTPWVQPLLMDLSPWRTKLQDIKSSLDNHTEVVFIADFPGLHLENFVSEDLGNTSIQLLQGEVTVELVAEQKNQTLQEGEKMQLPAGEYHKVYTVSSSPSCYMYVYVNTTEVALEQDLAYLQELKEKVENGSETGPLPPELQPLLEGEVKGGPEPTPLVQTFLRRQRKLQEIERRRNSPFHERFLRFVLRKLYVFRRSFLMTRISLRNLLLGRPSLEQLAQEVTYANLRPFEPVDESSASNTDSSNHPSEPDSEHVHSEF</sequence>
<dbReference type="EC" id="4.1.1.90" evidence="3"/>
<dbReference type="EMBL" id="AF087938">
    <property type="protein sequence ID" value="AAF21291.1"/>
    <property type="molecule type" value="mRNA"/>
</dbReference>
<dbReference type="EMBL" id="AK033496">
    <property type="protein sequence ID" value="BAC28319.1"/>
    <property type="molecule type" value="mRNA"/>
</dbReference>
<dbReference type="EMBL" id="AK036577">
    <property type="protein sequence ID" value="BAC29487.1"/>
    <property type="molecule type" value="mRNA"/>
</dbReference>
<dbReference type="EMBL" id="AK135425">
    <property type="protein sequence ID" value="BAE22528.1"/>
    <property type="molecule type" value="mRNA"/>
</dbReference>
<dbReference type="CCDS" id="CCDS20242.1"/>
<dbReference type="RefSeq" id="NP_062776.1">
    <property type="nucleotide sequence ID" value="NM_019802.6"/>
</dbReference>
<dbReference type="SMR" id="Q9QYC7"/>
<dbReference type="BioGRID" id="207897">
    <property type="interactions" value="6"/>
</dbReference>
<dbReference type="FunCoup" id="Q9QYC7">
    <property type="interactions" value="878"/>
</dbReference>
<dbReference type="STRING" id="10090.ENSMUSP00000070109"/>
<dbReference type="GlyGen" id="Q9QYC7">
    <property type="glycosylation" value="4 sites, 2 N-linked glycans (2 sites), 1 O-linked glycan (2 sites)"/>
</dbReference>
<dbReference type="iPTMnet" id="Q9QYC7"/>
<dbReference type="PhosphoSitePlus" id="Q9QYC7"/>
<dbReference type="jPOST" id="Q9QYC7"/>
<dbReference type="PaxDb" id="10090-ENSMUSP00000070109"/>
<dbReference type="ProteomicsDB" id="297960"/>
<dbReference type="Pumba" id="Q9QYC7"/>
<dbReference type="Antibodypedia" id="16941">
    <property type="antibodies" value="277 antibodies from 34 providers"/>
</dbReference>
<dbReference type="DNASU" id="56316"/>
<dbReference type="Ensembl" id="ENSMUST00000065906.9">
    <property type="protein sequence ID" value="ENSMUSP00000070109.8"/>
    <property type="gene ID" value="ENSMUSG00000053460.9"/>
</dbReference>
<dbReference type="GeneID" id="56316"/>
<dbReference type="KEGG" id="mmu:56316"/>
<dbReference type="UCSC" id="uc009cio.2">
    <property type="organism name" value="mouse"/>
</dbReference>
<dbReference type="AGR" id="MGI:1927655"/>
<dbReference type="CTD" id="2677"/>
<dbReference type="MGI" id="MGI:1927655">
    <property type="gene designation" value="Ggcx"/>
</dbReference>
<dbReference type="VEuPathDB" id="HostDB:ENSMUSG00000053460"/>
<dbReference type="eggNOG" id="ENOG502QRU2">
    <property type="taxonomic scope" value="Eukaryota"/>
</dbReference>
<dbReference type="GeneTree" id="ENSGT00390000014909"/>
<dbReference type="HOGENOM" id="CLU_020495_0_0_1"/>
<dbReference type="InParanoid" id="Q9QYC7"/>
<dbReference type="OMA" id="TYLNHYY"/>
<dbReference type="OrthoDB" id="206689at2759"/>
<dbReference type="PhylomeDB" id="Q9QYC7"/>
<dbReference type="TreeFam" id="TF323879"/>
<dbReference type="Reactome" id="R-MMU-159740">
    <property type="pathway name" value="Gamma-carboxylation of protein precursors"/>
</dbReference>
<dbReference type="BioGRID-ORCS" id="56316">
    <property type="hits" value="2 hits in 78 CRISPR screens"/>
</dbReference>
<dbReference type="PRO" id="PR:Q9QYC7"/>
<dbReference type="Proteomes" id="UP000000589">
    <property type="component" value="Chromosome 6"/>
</dbReference>
<dbReference type="RNAct" id="Q9QYC7">
    <property type="molecule type" value="protein"/>
</dbReference>
<dbReference type="Bgee" id="ENSMUSG00000053460">
    <property type="expression patterns" value="Expressed in humerus cartilage element and 110 other cell types or tissues"/>
</dbReference>
<dbReference type="ExpressionAtlas" id="Q9QYC7">
    <property type="expression patterns" value="baseline and differential"/>
</dbReference>
<dbReference type="GO" id="GO:0005788">
    <property type="term" value="C:endoplasmic reticulum lumen"/>
    <property type="evidence" value="ECO:0000314"/>
    <property type="project" value="MGI"/>
</dbReference>
<dbReference type="GO" id="GO:0005789">
    <property type="term" value="C:endoplasmic reticulum membrane"/>
    <property type="evidence" value="ECO:0007669"/>
    <property type="project" value="UniProtKB-SubCell"/>
</dbReference>
<dbReference type="GO" id="GO:0008488">
    <property type="term" value="F:gamma-glutamyl carboxylase activity"/>
    <property type="evidence" value="ECO:0000314"/>
    <property type="project" value="UniProtKB"/>
</dbReference>
<dbReference type="GO" id="GO:1903011">
    <property type="term" value="P:negative regulation of bone development"/>
    <property type="evidence" value="ECO:0000315"/>
    <property type="project" value="UniProt"/>
</dbReference>
<dbReference type="GO" id="GO:0046929">
    <property type="term" value="P:negative regulation of neurotransmitter secretion"/>
    <property type="evidence" value="ECO:0000315"/>
    <property type="project" value="UniProt"/>
</dbReference>
<dbReference type="GO" id="GO:2000225">
    <property type="term" value="P:negative regulation of testosterone biosynthetic process"/>
    <property type="evidence" value="ECO:0000315"/>
    <property type="project" value="UniProt"/>
</dbReference>
<dbReference type="GO" id="GO:0051604">
    <property type="term" value="P:protein maturation"/>
    <property type="evidence" value="ECO:0000315"/>
    <property type="project" value="MGI"/>
</dbReference>
<dbReference type="GO" id="GO:0042373">
    <property type="term" value="P:vitamin K metabolic process"/>
    <property type="evidence" value="ECO:0000315"/>
    <property type="project" value="MGI"/>
</dbReference>
<dbReference type="InterPro" id="IPR011020">
    <property type="entry name" value="HTTM-like"/>
</dbReference>
<dbReference type="InterPro" id="IPR053934">
    <property type="entry name" value="HTTM_dom"/>
</dbReference>
<dbReference type="InterPro" id="IPR011051">
    <property type="entry name" value="RmlC_Cupin_sf"/>
</dbReference>
<dbReference type="InterPro" id="IPR007782">
    <property type="entry name" value="VKG_COase"/>
</dbReference>
<dbReference type="InterPro" id="IPR053935">
    <property type="entry name" value="VKGC_lumenal_dom"/>
</dbReference>
<dbReference type="PANTHER" id="PTHR12639">
    <property type="entry name" value="VITAMIN K-DEPENDENT GAMMA-CARBOXYLASE"/>
    <property type="match status" value="1"/>
</dbReference>
<dbReference type="PANTHER" id="PTHR12639:SF6">
    <property type="entry name" value="VITAMIN K-DEPENDENT GAMMA-CARBOXYLASE"/>
    <property type="match status" value="1"/>
</dbReference>
<dbReference type="Pfam" id="PF05090">
    <property type="entry name" value="HTTM"/>
    <property type="match status" value="1"/>
</dbReference>
<dbReference type="Pfam" id="PF22777">
    <property type="entry name" value="VKGC_lumenal_dom"/>
    <property type="match status" value="1"/>
</dbReference>
<dbReference type="SMART" id="SM00752">
    <property type="entry name" value="HTTM"/>
    <property type="match status" value="1"/>
</dbReference>
<dbReference type="SUPFAM" id="SSF51182">
    <property type="entry name" value="RmlC-like cupins"/>
    <property type="match status" value="1"/>
</dbReference>
<gene>
    <name type="primary">Ggcx</name>
</gene>
<proteinExistence type="evidence at protein level"/>